<keyword id="KW-0027">Amidation</keyword>
<keyword id="KW-0119">Carbohydrate metabolism</keyword>
<keyword id="KW-0165">Cleavage on pair of basic residues</keyword>
<keyword id="KW-1015">Disulfide bond</keyword>
<keyword id="KW-0301">Gamma-carboxyglutamic acid</keyword>
<keyword id="KW-0313">Glucose metabolism</keyword>
<keyword id="KW-0372">Hormone</keyword>
<keyword id="KW-0379">Hydroxylation</keyword>
<keyword id="KW-0964">Secreted</keyword>
<keyword id="KW-0732">Signal</keyword>
<keyword id="KW-0800">Toxin</keyword>
<name>INS1B_CONTU</name>
<organism>
    <name type="scientific">Conus tulipa</name>
    <name type="common">Fish-hunting cone snail</name>
    <name type="synonym">Tulip cone</name>
    <dbReference type="NCBI Taxonomy" id="6495"/>
    <lineage>
        <taxon>Eukaryota</taxon>
        <taxon>Metazoa</taxon>
        <taxon>Spiralia</taxon>
        <taxon>Lophotrochozoa</taxon>
        <taxon>Mollusca</taxon>
        <taxon>Gastropoda</taxon>
        <taxon>Caenogastropoda</taxon>
        <taxon>Neogastropoda</taxon>
        <taxon>Conoidea</taxon>
        <taxon>Conidae</taxon>
        <taxon>Conus</taxon>
        <taxon>Gastridium</taxon>
    </lineage>
</organism>
<feature type="signal peptide" evidence="3">
    <location>
        <begin position="1"/>
        <end position="24"/>
    </location>
</feature>
<feature type="propeptide" id="PRO_0000439303" evidence="1">
    <location>
        <begin position="25"/>
        <end position="29"/>
    </location>
</feature>
<feature type="peptide" id="PRO_5002113060" description="Con-Ins T1B B chain" evidence="1">
    <location>
        <begin position="30"/>
        <end position="51"/>
    </location>
</feature>
<feature type="propeptide" id="PRO_0000439304" description="C peptide" evidence="1">
    <location>
        <begin position="52"/>
        <end position="94"/>
    </location>
</feature>
<feature type="peptide" id="PRO_0000439305" description="Con-Ins T1B A chain" evidence="1">
    <location>
        <begin position="95"/>
        <end position="114"/>
    </location>
</feature>
<feature type="modified residue" description="4-hydroxyproline; partial" evidence="1">
    <location>
        <position position="34"/>
    </location>
</feature>
<feature type="modified residue" description="4-carboxyglutamate" evidence="1">
    <location>
        <position position="98"/>
    </location>
</feature>
<feature type="modified residue" description="4-hydroxyproline; partial" evidence="1">
    <location>
        <position position="104"/>
    </location>
</feature>
<feature type="modified residue" description="4-carboxyglutamate; partial" evidence="1">
    <location>
        <position position="109"/>
    </location>
</feature>
<feature type="modified residue" description="Cysteine amide" evidence="1">
    <location>
        <position position="114"/>
    </location>
</feature>
<feature type="disulfide bond" description="Interchain (between B and A chains)" evidence="1">
    <location>
        <begin position="38"/>
        <end position="101"/>
    </location>
</feature>
<feature type="disulfide bond" description="Interchain (between B and A chains)" evidence="1">
    <location>
        <begin position="50"/>
        <end position="114"/>
    </location>
</feature>
<feature type="disulfide bond" evidence="1">
    <location>
        <begin position="100"/>
        <end position="105"/>
    </location>
</feature>
<sequence length="115" mass="13163">MTTSFYFLLMALGLLLYVCQSSFGNQHTRNSDTPKYRCGSDIPNSYMDLCFRKRNDAGKKRGQASPLWQRGGSLSMLKARAKRNEAFHLQRAHRGVVEHCCYRPCSNAEFKKFCG</sequence>
<accession>A0A0B5AC90</accession>
<evidence type="ECO:0000250" key="1">
    <source>
        <dbReference type="UniProtKB" id="A0A0B5AC95"/>
    </source>
</evidence>
<evidence type="ECO:0000250" key="2">
    <source>
        <dbReference type="UniProtKB" id="A0A0B5ADU4"/>
    </source>
</evidence>
<evidence type="ECO:0000255" key="3"/>
<evidence type="ECO:0000303" key="4">
    <source>
    </source>
</evidence>
<evidence type="ECO:0000303" key="5">
    <source>
    </source>
</evidence>
<evidence type="ECO:0000305" key="6">
    <source>
    </source>
</evidence>
<evidence type="ECO:0000305" key="7">
    <source>
    </source>
</evidence>
<evidence type="ECO:0000312" key="8">
    <source>
        <dbReference type="EMBL" id="AJD85827.1"/>
    </source>
</evidence>
<proteinExistence type="inferred from homology"/>
<reference key="1">
    <citation type="journal article" date="2015" name="Proc. Natl. Acad. Sci. U.S.A.">
        <title>Specialized insulin is used for chemical warfare by fish-hunting cone snails.</title>
        <authorList>
            <person name="Safavi-Hemami H."/>
            <person name="Gajewiak J."/>
            <person name="Karanth S."/>
            <person name="Robinson S.D."/>
            <person name="Ueberheide B."/>
            <person name="Douglass A.D."/>
            <person name="Schlegel A."/>
            <person name="Imperial J.S."/>
            <person name="Watkins M."/>
            <person name="Bandyopadhyay P.K."/>
            <person name="Yandell M."/>
            <person name="Li Q."/>
            <person name="Purcell A.W."/>
            <person name="Norton R.S."/>
            <person name="Ellgaard L."/>
            <person name="Olivera B.M."/>
        </authorList>
    </citation>
    <scope>NUCLEOTIDE SEQUENCE [MRNA]</scope>
    <source>
        <tissue>Venom gland</tissue>
    </source>
</reference>
<reference key="2">
    <citation type="journal article" date="2019" name="Elife">
        <title>Fish-hunting cone snail venoms are a rich source of minimized ligands of the vertebrate insulin receptor.</title>
        <authorList>
            <person name="Ahorukomeye P."/>
            <person name="Disotuar M.M."/>
            <person name="Gajewiak J."/>
            <person name="Karanth S."/>
            <person name="Watkins M."/>
            <person name="Robinson S.D."/>
            <person name="Florez Salcedo P."/>
            <person name="Smith N.A."/>
            <person name="Smith B.J."/>
            <person name="Schlegel A."/>
            <person name="Forbes B.E."/>
            <person name="Olivera B."/>
            <person name="Hung-Chieh Chou D."/>
            <person name="Safavi-Hemami H."/>
        </authorList>
    </citation>
    <scope>FUNCTION</scope>
    <scope>SYNTHESIS OF 30-51 AND 95-114</scope>
</reference>
<dbReference type="EMBL" id="KP268611">
    <property type="protein sequence ID" value="AJD85827.1"/>
    <property type="molecule type" value="mRNA"/>
</dbReference>
<dbReference type="GO" id="GO:0005576">
    <property type="term" value="C:extracellular region"/>
    <property type="evidence" value="ECO:0007669"/>
    <property type="project" value="UniProtKB-SubCell"/>
</dbReference>
<dbReference type="GO" id="GO:0005179">
    <property type="term" value="F:hormone activity"/>
    <property type="evidence" value="ECO:0007669"/>
    <property type="project" value="UniProtKB-KW"/>
</dbReference>
<dbReference type="GO" id="GO:0090729">
    <property type="term" value="F:toxin activity"/>
    <property type="evidence" value="ECO:0007669"/>
    <property type="project" value="UniProtKB-KW"/>
</dbReference>
<dbReference type="GO" id="GO:0006006">
    <property type="term" value="P:glucose metabolic process"/>
    <property type="evidence" value="ECO:0007669"/>
    <property type="project" value="UniProtKB-KW"/>
</dbReference>
<dbReference type="Gene3D" id="1.10.100.10">
    <property type="entry name" value="Insulin-like"/>
    <property type="match status" value="1"/>
</dbReference>
<dbReference type="InterPro" id="IPR016179">
    <property type="entry name" value="Insulin-like"/>
</dbReference>
<dbReference type="InterPro" id="IPR036438">
    <property type="entry name" value="Insulin-like_sf"/>
</dbReference>
<dbReference type="InterPro" id="IPR022353">
    <property type="entry name" value="Insulin_CS"/>
</dbReference>
<dbReference type="Pfam" id="PF00049">
    <property type="entry name" value="Insulin"/>
    <property type="match status" value="1"/>
</dbReference>
<dbReference type="SMART" id="SM00078">
    <property type="entry name" value="IlGF"/>
    <property type="match status" value="1"/>
</dbReference>
<dbReference type="SUPFAM" id="SSF56994">
    <property type="entry name" value="Insulin-like"/>
    <property type="match status" value="1"/>
</dbReference>
<dbReference type="PROSITE" id="PS00262">
    <property type="entry name" value="INSULIN"/>
    <property type="match status" value="1"/>
</dbReference>
<protein>
    <recommendedName>
        <fullName evidence="5">Con-Ins T1B</fullName>
    </recommendedName>
    <alternativeName>
        <fullName evidence="4">Con-Ins T2</fullName>
    </alternativeName>
    <alternativeName>
        <fullName evidence="8">Insulin 2</fullName>
    </alternativeName>
    <component>
        <recommendedName>
            <fullName evidence="5">Con-Ins T1B B chain</fullName>
        </recommendedName>
        <alternativeName>
            <fullName evidence="4">Con-Ins T2 B chain</fullName>
        </alternativeName>
    </component>
    <component>
        <recommendedName>
            <fullName evidence="5">Con-Ins T1B A chain</fullName>
        </recommendedName>
        <alternativeName>
            <fullName evidence="4">Con-Ins T2 A chain</fullName>
        </alternativeName>
    </component>
</protein>
<comment type="function">
    <text evidence="1 2">This venom insulin, from a fish-hunting cone snail, facilitates prey capture by rapidly inducing hypoglycemic shock (By similarity). It is one of the smallest known insulin found in nature and lacks the C-terminal segment of the B chain that, in human insulin, mediates engagement of the insulin receptor (INSR) and assembly of the hormone's hexameric storage form (By similarity). Despite lacking this segment, it both binds and activates human insulin receptor (long isoform (HIR-B) of INSR) with a high potency (EC(50)=12.0 nM) (PubMed:30747102). In vivo, intraperitoneal injection of this peptide into zebrafish lowers blood glucose with a lower potency than human insulin (By similarity). In addition, when applied to water, this peptide reduces overall locomotor activity of zebrafish larvae, observed as a significant decrease in the percentage of time spent swimming and movement frequency (By similarity). When tested on a mouse model of diabetes, this insulin also lowers blood glucose with a 10-fold lower potency than human insulin (By similarity).</text>
</comment>
<comment type="subunit">
    <text evidence="1">Heterodimer of A and B chains; disulfide-linked.</text>
</comment>
<comment type="subcellular location">
    <subcellularLocation>
        <location evidence="1">Secreted</location>
    </subcellularLocation>
</comment>
<comment type="tissue specificity">
    <text evidence="6">Expressed by the venom gland.</text>
</comment>
<comment type="miscellaneous">
    <text evidence="7">Is possibly an allelic variant of Con-Ins T1A (AC A0A0B5ADU4).</text>
</comment>
<comment type="similarity">
    <text>Belongs to the insulin family.</text>
</comment>